<evidence type="ECO:0000255" key="1">
    <source>
        <dbReference type="HAMAP-Rule" id="MF_01127"/>
    </source>
</evidence>
<name>Y3031_YERPE</name>
<comment type="similarity">
    <text evidence="1">Belongs to the acetyltransferase family. YpeA subfamily.</text>
</comment>
<keyword id="KW-0012">Acyltransferase</keyword>
<keyword id="KW-1185">Reference proteome</keyword>
<keyword id="KW-0808">Transferase</keyword>
<reference key="1">
    <citation type="journal article" date="2001" name="Nature">
        <title>Genome sequence of Yersinia pestis, the causative agent of plague.</title>
        <authorList>
            <person name="Parkhill J."/>
            <person name="Wren B.W."/>
            <person name="Thomson N.R."/>
            <person name="Titball R.W."/>
            <person name="Holden M.T.G."/>
            <person name="Prentice M.B."/>
            <person name="Sebaihia M."/>
            <person name="James K.D."/>
            <person name="Churcher C.M."/>
            <person name="Mungall K.L."/>
            <person name="Baker S."/>
            <person name="Basham D."/>
            <person name="Bentley S.D."/>
            <person name="Brooks K."/>
            <person name="Cerdeno-Tarraga A.-M."/>
            <person name="Chillingworth T."/>
            <person name="Cronin A."/>
            <person name="Davies R.M."/>
            <person name="Davis P."/>
            <person name="Dougan G."/>
            <person name="Feltwell T."/>
            <person name="Hamlin N."/>
            <person name="Holroyd S."/>
            <person name="Jagels K."/>
            <person name="Karlyshev A.V."/>
            <person name="Leather S."/>
            <person name="Moule S."/>
            <person name="Oyston P.C.F."/>
            <person name="Quail M.A."/>
            <person name="Rutherford K.M."/>
            <person name="Simmonds M."/>
            <person name="Skelton J."/>
            <person name="Stevens K."/>
            <person name="Whitehead S."/>
            <person name="Barrell B.G."/>
        </authorList>
    </citation>
    <scope>NUCLEOTIDE SEQUENCE [LARGE SCALE GENOMIC DNA]</scope>
    <source>
        <strain>CO-92 / Biovar Orientalis</strain>
    </source>
</reference>
<reference key="2">
    <citation type="journal article" date="2002" name="J. Bacteriol.">
        <title>Genome sequence of Yersinia pestis KIM.</title>
        <authorList>
            <person name="Deng W."/>
            <person name="Burland V."/>
            <person name="Plunkett G. III"/>
            <person name="Boutin A."/>
            <person name="Mayhew G.F."/>
            <person name="Liss P."/>
            <person name="Perna N.T."/>
            <person name="Rose D.J."/>
            <person name="Mau B."/>
            <person name="Zhou S."/>
            <person name="Schwartz D.C."/>
            <person name="Fetherston J.D."/>
            <person name="Lindler L.E."/>
            <person name="Brubaker R.R."/>
            <person name="Plano G.V."/>
            <person name="Straley S.C."/>
            <person name="McDonough K.A."/>
            <person name="Nilles M.L."/>
            <person name="Matson J.S."/>
            <person name="Blattner F.R."/>
            <person name="Perry R.D."/>
        </authorList>
    </citation>
    <scope>NUCLEOTIDE SEQUENCE [LARGE SCALE GENOMIC DNA]</scope>
    <source>
        <strain>KIM10+ / Biovar Mediaevalis</strain>
    </source>
</reference>
<reference key="3">
    <citation type="journal article" date="2004" name="DNA Res.">
        <title>Complete genome sequence of Yersinia pestis strain 91001, an isolate avirulent to humans.</title>
        <authorList>
            <person name="Song Y."/>
            <person name="Tong Z."/>
            <person name="Wang J."/>
            <person name="Wang L."/>
            <person name="Guo Z."/>
            <person name="Han Y."/>
            <person name="Zhang J."/>
            <person name="Pei D."/>
            <person name="Zhou D."/>
            <person name="Qin H."/>
            <person name="Pang X."/>
            <person name="Han Y."/>
            <person name="Zhai J."/>
            <person name="Li M."/>
            <person name="Cui B."/>
            <person name="Qi Z."/>
            <person name="Jin L."/>
            <person name="Dai R."/>
            <person name="Chen F."/>
            <person name="Li S."/>
            <person name="Ye C."/>
            <person name="Du Z."/>
            <person name="Lin W."/>
            <person name="Wang J."/>
            <person name="Yu J."/>
            <person name="Yang H."/>
            <person name="Wang J."/>
            <person name="Huang P."/>
            <person name="Yang R."/>
        </authorList>
    </citation>
    <scope>NUCLEOTIDE SEQUENCE [LARGE SCALE GENOMIC DNA]</scope>
    <source>
        <strain>91001 / Biovar Mediaevalis</strain>
    </source>
</reference>
<dbReference type="EC" id="2.3.1.-" evidence="1"/>
<dbReference type="EMBL" id="AL590842">
    <property type="protein sequence ID" value="CAL21633.1"/>
    <property type="molecule type" value="Genomic_DNA"/>
</dbReference>
<dbReference type="EMBL" id="AE009952">
    <property type="protein sequence ID" value="AAM85023.1"/>
    <property type="molecule type" value="Genomic_DNA"/>
</dbReference>
<dbReference type="EMBL" id="AE017042">
    <property type="protein sequence ID" value="AAS62846.1"/>
    <property type="molecule type" value="Genomic_DNA"/>
</dbReference>
<dbReference type="PIR" id="AF0368">
    <property type="entry name" value="AF0368"/>
</dbReference>
<dbReference type="RefSeq" id="WP_002208525.1">
    <property type="nucleotide sequence ID" value="NZ_WUCM01000010.1"/>
</dbReference>
<dbReference type="RefSeq" id="YP_002347951.1">
    <property type="nucleotide sequence ID" value="NC_003143.1"/>
</dbReference>
<dbReference type="SMR" id="Q8ZCG0"/>
<dbReference type="STRING" id="214092.YPO3031"/>
<dbReference type="PaxDb" id="214092-YPO3031"/>
<dbReference type="DNASU" id="1146399"/>
<dbReference type="EnsemblBacteria" id="AAS62846">
    <property type="protein sequence ID" value="AAS62846"/>
    <property type="gene ID" value="YP_2654"/>
</dbReference>
<dbReference type="KEGG" id="ype:YPO3031"/>
<dbReference type="KEGG" id="ypk:y1452"/>
<dbReference type="KEGG" id="ypm:YP_2654"/>
<dbReference type="PATRIC" id="fig|214092.21.peg.3484"/>
<dbReference type="eggNOG" id="COG0456">
    <property type="taxonomic scope" value="Bacteria"/>
</dbReference>
<dbReference type="HOGENOM" id="CLU_013985_34_1_6"/>
<dbReference type="OMA" id="IAGFDGW"/>
<dbReference type="OrthoDB" id="1821130at2"/>
<dbReference type="Proteomes" id="UP000000815">
    <property type="component" value="Chromosome"/>
</dbReference>
<dbReference type="Proteomes" id="UP000001019">
    <property type="component" value="Chromosome"/>
</dbReference>
<dbReference type="Proteomes" id="UP000002490">
    <property type="component" value="Chromosome"/>
</dbReference>
<dbReference type="GO" id="GO:0016747">
    <property type="term" value="F:acyltransferase activity, transferring groups other than amino-acyl groups"/>
    <property type="evidence" value="ECO:0007669"/>
    <property type="project" value="UniProtKB-UniRule"/>
</dbReference>
<dbReference type="CDD" id="cd04301">
    <property type="entry name" value="NAT_SF"/>
    <property type="match status" value="1"/>
</dbReference>
<dbReference type="Gene3D" id="3.40.630.30">
    <property type="match status" value="1"/>
</dbReference>
<dbReference type="HAMAP" id="MF_01127">
    <property type="entry name" value="Acetyltransf_YpeA"/>
    <property type="match status" value="1"/>
</dbReference>
<dbReference type="InterPro" id="IPR023072">
    <property type="entry name" value="Acetyltransferase_YpeA"/>
</dbReference>
<dbReference type="InterPro" id="IPR016181">
    <property type="entry name" value="Acyl_CoA_acyltransferase"/>
</dbReference>
<dbReference type="InterPro" id="IPR000182">
    <property type="entry name" value="GNAT_dom"/>
</dbReference>
<dbReference type="NCBIfam" id="NF002959">
    <property type="entry name" value="PRK03624.1"/>
    <property type="match status" value="1"/>
</dbReference>
<dbReference type="PANTHER" id="PTHR43072:SF51">
    <property type="entry name" value="ABC SUPERFAMILY TRANSPORT PROTEIN"/>
    <property type="match status" value="1"/>
</dbReference>
<dbReference type="PANTHER" id="PTHR43072">
    <property type="entry name" value="N-ACETYLTRANSFERASE"/>
    <property type="match status" value="1"/>
</dbReference>
<dbReference type="Pfam" id="PF00583">
    <property type="entry name" value="Acetyltransf_1"/>
    <property type="match status" value="1"/>
</dbReference>
<dbReference type="SUPFAM" id="SSF55729">
    <property type="entry name" value="Acyl-CoA N-acyltransferases (Nat)"/>
    <property type="match status" value="1"/>
</dbReference>
<dbReference type="PROSITE" id="PS51186">
    <property type="entry name" value="GNAT"/>
    <property type="match status" value="1"/>
</dbReference>
<feature type="chain" id="PRO_0000074626" description="Uncharacterized N-acetyltransferase YPO3031/y1452/YP_2654">
    <location>
        <begin position="1"/>
        <end position="141"/>
    </location>
</feature>
<feature type="domain" description="N-acetyltransferase" evidence="1">
    <location>
        <begin position="1"/>
        <end position="141"/>
    </location>
</feature>
<proteinExistence type="inferred from homology"/>
<gene>
    <name type="ordered locus">YPO3031</name>
    <name type="ordered locus">y1452</name>
    <name type="ordered locus">YP_2654</name>
</gene>
<organism>
    <name type="scientific">Yersinia pestis</name>
    <dbReference type="NCBI Taxonomy" id="632"/>
    <lineage>
        <taxon>Bacteria</taxon>
        <taxon>Pseudomonadati</taxon>
        <taxon>Pseudomonadota</taxon>
        <taxon>Gammaproteobacteria</taxon>
        <taxon>Enterobacterales</taxon>
        <taxon>Yersiniaceae</taxon>
        <taxon>Yersinia</taxon>
    </lineage>
</organism>
<sequence>MEIRIFQQDDFEEVILLWEHCDLLRPWNDPEMDIERKLNHDPELFLVAEVNGTIVGSVMGGYDGHRGSAYYLGVHPDYRGRGFANALISRLEKKLIARGCPKLNIMVREDNDAVIGMYEKLDYETQDTIMLGKRLIVDQEY</sequence>
<accession>Q8ZCG0</accession>
<accession>Q0WCN7</accession>
<protein>
    <recommendedName>
        <fullName>Uncharacterized N-acetyltransferase YPO3031/y1452/YP_2654</fullName>
        <ecNumber evidence="1">2.3.1.-</ecNumber>
    </recommendedName>
</protein>